<dbReference type="EMBL" id="AE014075">
    <property type="protein sequence ID" value="AAN83058.1"/>
    <property type="molecule type" value="Genomic_DNA"/>
</dbReference>
<dbReference type="PIR" id="C21915">
    <property type="entry name" value="R5EC34"/>
</dbReference>
<dbReference type="RefSeq" id="WP_000831330.1">
    <property type="nucleotide sequence ID" value="NZ_CP051263.1"/>
</dbReference>
<dbReference type="SMR" id="P0A7P6"/>
<dbReference type="STRING" id="199310.c4627"/>
<dbReference type="GeneID" id="98190980"/>
<dbReference type="KEGG" id="ecc:c4627"/>
<dbReference type="eggNOG" id="COG0230">
    <property type="taxonomic scope" value="Bacteria"/>
</dbReference>
<dbReference type="HOGENOM" id="CLU_129938_2_1_6"/>
<dbReference type="BioCyc" id="ECOL199310:C4627-MONOMER"/>
<dbReference type="Proteomes" id="UP000001410">
    <property type="component" value="Chromosome"/>
</dbReference>
<dbReference type="GO" id="GO:1990904">
    <property type="term" value="C:ribonucleoprotein complex"/>
    <property type="evidence" value="ECO:0007669"/>
    <property type="project" value="UniProtKB-KW"/>
</dbReference>
<dbReference type="GO" id="GO:0005840">
    <property type="term" value="C:ribosome"/>
    <property type="evidence" value="ECO:0007669"/>
    <property type="project" value="UniProtKB-KW"/>
</dbReference>
<dbReference type="GO" id="GO:0003735">
    <property type="term" value="F:structural constituent of ribosome"/>
    <property type="evidence" value="ECO:0007669"/>
    <property type="project" value="InterPro"/>
</dbReference>
<dbReference type="GO" id="GO:0006412">
    <property type="term" value="P:translation"/>
    <property type="evidence" value="ECO:0007669"/>
    <property type="project" value="UniProtKB-UniRule"/>
</dbReference>
<dbReference type="FunFam" id="1.10.287.3980:FF:000001">
    <property type="entry name" value="Mitochondrial ribosomal protein L34"/>
    <property type="match status" value="1"/>
</dbReference>
<dbReference type="Gene3D" id="1.10.287.3980">
    <property type="match status" value="1"/>
</dbReference>
<dbReference type="HAMAP" id="MF_00391">
    <property type="entry name" value="Ribosomal_bL34"/>
    <property type="match status" value="1"/>
</dbReference>
<dbReference type="InterPro" id="IPR000271">
    <property type="entry name" value="Ribosomal_bL34"/>
</dbReference>
<dbReference type="InterPro" id="IPR020939">
    <property type="entry name" value="Ribosomal_bL34_CS"/>
</dbReference>
<dbReference type="NCBIfam" id="TIGR01030">
    <property type="entry name" value="rpmH_bact"/>
    <property type="match status" value="1"/>
</dbReference>
<dbReference type="PANTHER" id="PTHR14503:SF4">
    <property type="entry name" value="LARGE RIBOSOMAL SUBUNIT PROTEIN BL34M"/>
    <property type="match status" value="1"/>
</dbReference>
<dbReference type="PANTHER" id="PTHR14503">
    <property type="entry name" value="MITOCHONDRIAL RIBOSOMAL PROTEIN 34 FAMILY MEMBER"/>
    <property type="match status" value="1"/>
</dbReference>
<dbReference type="Pfam" id="PF00468">
    <property type="entry name" value="Ribosomal_L34"/>
    <property type="match status" value="1"/>
</dbReference>
<dbReference type="PROSITE" id="PS00784">
    <property type="entry name" value="RIBOSOMAL_L34"/>
    <property type="match status" value="1"/>
</dbReference>
<evidence type="ECO:0000305" key="1"/>
<sequence>MKRTFQPSVLKRNRSHGFRARMATKNGRQVLARRRAKGRARLTVSK</sequence>
<accession>P0A7P6</accession>
<accession>P02437</accession>
<organism>
    <name type="scientific">Escherichia coli O6:H1 (strain CFT073 / ATCC 700928 / UPEC)</name>
    <dbReference type="NCBI Taxonomy" id="199310"/>
    <lineage>
        <taxon>Bacteria</taxon>
        <taxon>Pseudomonadati</taxon>
        <taxon>Pseudomonadota</taxon>
        <taxon>Gammaproteobacteria</taxon>
        <taxon>Enterobacterales</taxon>
        <taxon>Enterobacteriaceae</taxon>
        <taxon>Escherichia</taxon>
    </lineage>
</organism>
<keyword id="KW-1185">Reference proteome</keyword>
<keyword id="KW-0687">Ribonucleoprotein</keyword>
<keyword id="KW-0689">Ribosomal protein</keyword>
<feature type="chain" id="PRO_0000187378" description="Large ribosomal subunit protein bL34">
    <location>
        <begin position="1"/>
        <end position="46"/>
    </location>
</feature>
<proteinExistence type="inferred from homology"/>
<comment type="similarity">
    <text evidence="1">Belongs to the bacterial ribosomal protein bL34 family.</text>
</comment>
<name>RL34_ECOL6</name>
<gene>
    <name type="primary">rpmH</name>
    <name type="synonym">rimA</name>
    <name type="synonym">ssaF</name>
    <name type="ordered locus">c4627</name>
</gene>
<reference key="1">
    <citation type="journal article" date="2002" name="Proc. Natl. Acad. Sci. U.S.A.">
        <title>Extensive mosaic structure revealed by the complete genome sequence of uropathogenic Escherichia coli.</title>
        <authorList>
            <person name="Welch R.A."/>
            <person name="Burland V."/>
            <person name="Plunkett G. III"/>
            <person name="Redford P."/>
            <person name="Roesch P."/>
            <person name="Rasko D."/>
            <person name="Buckles E.L."/>
            <person name="Liou S.-R."/>
            <person name="Boutin A."/>
            <person name="Hackett J."/>
            <person name="Stroud D."/>
            <person name="Mayhew G.F."/>
            <person name="Rose D.J."/>
            <person name="Zhou S."/>
            <person name="Schwartz D.C."/>
            <person name="Perna N.T."/>
            <person name="Mobley H.L.T."/>
            <person name="Donnenberg M.S."/>
            <person name="Blattner F.R."/>
        </authorList>
    </citation>
    <scope>NUCLEOTIDE SEQUENCE [LARGE SCALE GENOMIC DNA]</scope>
    <source>
        <strain>CFT073 / ATCC 700928 / UPEC</strain>
    </source>
</reference>
<protein>
    <recommendedName>
        <fullName evidence="1">Large ribosomal subunit protein bL34</fullName>
    </recommendedName>
    <alternativeName>
        <fullName>50S ribosomal protein L34</fullName>
    </alternativeName>
</protein>